<protein>
    <recommendedName>
        <fullName>GTP-binding protein Rho1</fullName>
    </recommendedName>
</protein>
<proteinExistence type="inferred from homology"/>
<comment type="subcellular location">
    <subcellularLocation>
        <location evidence="3">Cell membrane</location>
        <topology evidence="3">Lipid-anchor</topology>
        <orientation evidence="3">Cytoplasmic side</orientation>
    </subcellularLocation>
</comment>
<comment type="similarity">
    <text evidence="3">Belongs to the small GTPase superfamily. Rho family.</text>
</comment>
<accession>Q8J212</accession>
<organism>
    <name type="scientific">Kluyveromyces lactis (strain ATCC 8585 / CBS 2359 / DSM 70799 / NBRC 1267 / NRRL Y-1140 / WM37)</name>
    <name type="common">Yeast</name>
    <name type="synonym">Candida sphaerica</name>
    <dbReference type="NCBI Taxonomy" id="284590"/>
    <lineage>
        <taxon>Eukaryota</taxon>
        <taxon>Fungi</taxon>
        <taxon>Dikarya</taxon>
        <taxon>Ascomycota</taxon>
        <taxon>Saccharomycotina</taxon>
        <taxon>Saccharomycetes</taxon>
        <taxon>Saccharomycetales</taxon>
        <taxon>Saccharomycetaceae</taxon>
        <taxon>Kluyveromyces</taxon>
    </lineage>
</organism>
<reference key="1">
    <citation type="submission" date="2002-07" db="EMBL/GenBank/DDBJ databases">
        <title>Protein kinase C mediated signal transduction in Kluyveromyces lactis.</title>
        <authorList>
            <person name="Rodicio R."/>
            <person name="Heinisch J.J."/>
        </authorList>
    </citation>
    <scope>NUCLEOTIDE SEQUENCE [GENOMIC DNA]</scope>
</reference>
<reference key="2">
    <citation type="journal article" date="2004" name="Nature">
        <title>Genome evolution in yeasts.</title>
        <authorList>
            <person name="Dujon B."/>
            <person name="Sherman D."/>
            <person name="Fischer G."/>
            <person name="Durrens P."/>
            <person name="Casaregola S."/>
            <person name="Lafontaine I."/>
            <person name="de Montigny J."/>
            <person name="Marck C."/>
            <person name="Neuveglise C."/>
            <person name="Talla E."/>
            <person name="Goffard N."/>
            <person name="Frangeul L."/>
            <person name="Aigle M."/>
            <person name="Anthouard V."/>
            <person name="Babour A."/>
            <person name="Barbe V."/>
            <person name="Barnay S."/>
            <person name="Blanchin S."/>
            <person name="Beckerich J.-M."/>
            <person name="Beyne E."/>
            <person name="Bleykasten C."/>
            <person name="Boisrame A."/>
            <person name="Boyer J."/>
            <person name="Cattolico L."/>
            <person name="Confanioleri F."/>
            <person name="de Daruvar A."/>
            <person name="Despons L."/>
            <person name="Fabre E."/>
            <person name="Fairhead C."/>
            <person name="Ferry-Dumazet H."/>
            <person name="Groppi A."/>
            <person name="Hantraye F."/>
            <person name="Hennequin C."/>
            <person name="Jauniaux N."/>
            <person name="Joyet P."/>
            <person name="Kachouri R."/>
            <person name="Kerrest A."/>
            <person name="Koszul R."/>
            <person name="Lemaire M."/>
            <person name="Lesur I."/>
            <person name="Ma L."/>
            <person name="Muller H."/>
            <person name="Nicaud J.-M."/>
            <person name="Nikolski M."/>
            <person name="Oztas S."/>
            <person name="Ozier-Kalogeropoulos O."/>
            <person name="Pellenz S."/>
            <person name="Potier S."/>
            <person name="Richard G.-F."/>
            <person name="Straub M.-L."/>
            <person name="Suleau A."/>
            <person name="Swennen D."/>
            <person name="Tekaia F."/>
            <person name="Wesolowski-Louvel M."/>
            <person name="Westhof E."/>
            <person name="Wirth B."/>
            <person name="Zeniou-Meyer M."/>
            <person name="Zivanovic Y."/>
            <person name="Bolotin-Fukuhara M."/>
            <person name="Thierry A."/>
            <person name="Bouchier C."/>
            <person name="Caudron B."/>
            <person name="Scarpelli C."/>
            <person name="Gaillardin C."/>
            <person name="Weissenbach J."/>
            <person name="Wincker P."/>
            <person name="Souciet J.-L."/>
        </authorList>
    </citation>
    <scope>NUCLEOTIDE SEQUENCE [LARGE SCALE GENOMIC DNA]</scope>
    <source>
        <strain>ATCC 8585 / CBS 2359 / DSM 70799 / NBRC 1267 / NRRL Y-1140 / WM37</strain>
    </source>
</reference>
<evidence type="ECO:0000250" key="1"/>
<evidence type="ECO:0000256" key="2">
    <source>
        <dbReference type="SAM" id="MobiDB-lite"/>
    </source>
</evidence>
<evidence type="ECO:0000305" key="3"/>
<feature type="chain" id="PRO_0000198938" description="GTP-binding protein Rho1">
    <location>
        <begin position="1"/>
        <end position="205"/>
    </location>
</feature>
<feature type="propeptide" id="PRO_0000281268" description="Removed in mature form" evidence="1">
    <location>
        <begin position="206"/>
        <end position="208"/>
    </location>
</feature>
<feature type="region of interest" description="Disordered" evidence="2">
    <location>
        <begin position="188"/>
        <end position="208"/>
    </location>
</feature>
<feature type="short sequence motif" description="Effector region" evidence="1">
    <location>
        <begin position="41"/>
        <end position="49"/>
    </location>
</feature>
<feature type="compositionally biased region" description="Basic residues" evidence="2">
    <location>
        <begin position="191"/>
        <end position="208"/>
    </location>
</feature>
<feature type="binding site" evidence="1">
    <location>
        <begin position="19"/>
        <end position="26"/>
    </location>
    <ligand>
        <name>GTP</name>
        <dbReference type="ChEBI" id="CHEBI:37565"/>
    </ligand>
</feature>
<feature type="binding site" evidence="1">
    <location>
        <begin position="66"/>
        <end position="70"/>
    </location>
    <ligand>
        <name>GTP</name>
        <dbReference type="ChEBI" id="CHEBI:37565"/>
    </ligand>
</feature>
<feature type="binding site" evidence="1">
    <location>
        <begin position="124"/>
        <end position="127"/>
    </location>
    <ligand>
        <name>GTP</name>
        <dbReference type="ChEBI" id="CHEBI:37565"/>
    </ligand>
</feature>
<feature type="modified residue" description="Cysteine methyl ester" evidence="1">
    <location>
        <position position="205"/>
    </location>
</feature>
<feature type="lipid moiety-binding region" description="S-geranylgeranyl cysteine" evidence="1">
    <location>
        <position position="205"/>
    </location>
</feature>
<keyword id="KW-1003">Cell membrane</keyword>
<keyword id="KW-0342">GTP-binding</keyword>
<keyword id="KW-0449">Lipoprotein</keyword>
<keyword id="KW-0472">Membrane</keyword>
<keyword id="KW-0488">Methylation</keyword>
<keyword id="KW-0547">Nucleotide-binding</keyword>
<keyword id="KW-0636">Prenylation</keyword>
<keyword id="KW-1185">Reference proteome</keyword>
<dbReference type="EMBL" id="AY129674">
    <property type="protein sequence ID" value="AAN05733.1"/>
    <property type="molecule type" value="Genomic_DNA"/>
</dbReference>
<dbReference type="EMBL" id="CR382122">
    <property type="protein sequence ID" value="CAH02395.1"/>
    <property type="molecule type" value="Genomic_DNA"/>
</dbReference>
<dbReference type="RefSeq" id="XP_452002.1">
    <property type="nucleotide sequence ID" value="XM_452002.1"/>
</dbReference>
<dbReference type="SMR" id="Q8J212"/>
<dbReference type="FunCoup" id="Q8J212">
    <property type="interactions" value="823"/>
</dbReference>
<dbReference type="STRING" id="284590.Q8J212"/>
<dbReference type="PaxDb" id="284590-Q8J212"/>
<dbReference type="KEGG" id="kla:KLLA0_B10626g"/>
<dbReference type="eggNOG" id="KOG0393">
    <property type="taxonomic scope" value="Eukaryota"/>
</dbReference>
<dbReference type="HOGENOM" id="CLU_041217_21_2_1"/>
<dbReference type="InParanoid" id="Q8J212"/>
<dbReference type="OMA" id="QFPEFYV"/>
<dbReference type="Proteomes" id="UP000000598">
    <property type="component" value="Chromosome B"/>
</dbReference>
<dbReference type="GO" id="GO:0005886">
    <property type="term" value="C:plasma membrane"/>
    <property type="evidence" value="ECO:0007669"/>
    <property type="project" value="UniProtKB-SubCell"/>
</dbReference>
<dbReference type="GO" id="GO:0005525">
    <property type="term" value="F:GTP binding"/>
    <property type="evidence" value="ECO:0007669"/>
    <property type="project" value="UniProtKB-KW"/>
</dbReference>
<dbReference type="GO" id="GO:0003924">
    <property type="term" value="F:GTPase activity"/>
    <property type="evidence" value="ECO:0007669"/>
    <property type="project" value="InterPro"/>
</dbReference>
<dbReference type="GO" id="GO:0007264">
    <property type="term" value="P:small GTPase-mediated signal transduction"/>
    <property type="evidence" value="ECO:0007669"/>
    <property type="project" value="InterPro"/>
</dbReference>
<dbReference type="CDD" id="cd01870">
    <property type="entry name" value="RhoA_like"/>
    <property type="match status" value="1"/>
</dbReference>
<dbReference type="FunFam" id="3.40.50.300:FF:000329">
    <property type="entry name" value="GTP-binding protein rhoA"/>
    <property type="match status" value="1"/>
</dbReference>
<dbReference type="Gene3D" id="3.40.50.300">
    <property type="entry name" value="P-loop containing nucleotide triphosphate hydrolases"/>
    <property type="match status" value="1"/>
</dbReference>
<dbReference type="InterPro" id="IPR027417">
    <property type="entry name" value="P-loop_NTPase"/>
</dbReference>
<dbReference type="InterPro" id="IPR005225">
    <property type="entry name" value="Small_GTP-bd"/>
</dbReference>
<dbReference type="InterPro" id="IPR001806">
    <property type="entry name" value="Small_GTPase"/>
</dbReference>
<dbReference type="InterPro" id="IPR003578">
    <property type="entry name" value="Small_GTPase_Rho"/>
</dbReference>
<dbReference type="NCBIfam" id="TIGR00231">
    <property type="entry name" value="small_GTP"/>
    <property type="match status" value="1"/>
</dbReference>
<dbReference type="PANTHER" id="PTHR24072">
    <property type="entry name" value="RHO FAMILY GTPASE"/>
    <property type="match status" value="1"/>
</dbReference>
<dbReference type="Pfam" id="PF00071">
    <property type="entry name" value="Ras"/>
    <property type="match status" value="1"/>
</dbReference>
<dbReference type="PRINTS" id="PR00449">
    <property type="entry name" value="RASTRNSFRMNG"/>
</dbReference>
<dbReference type="SMART" id="SM00175">
    <property type="entry name" value="RAB"/>
    <property type="match status" value="1"/>
</dbReference>
<dbReference type="SMART" id="SM00173">
    <property type="entry name" value="RAS"/>
    <property type="match status" value="1"/>
</dbReference>
<dbReference type="SMART" id="SM00174">
    <property type="entry name" value="RHO"/>
    <property type="match status" value="1"/>
</dbReference>
<dbReference type="SUPFAM" id="SSF52540">
    <property type="entry name" value="P-loop containing nucleoside triphosphate hydrolases"/>
    <property type="match status" value="1"/>
</dbReference>
<dbReference type="PROSITE" id="PS51420">
    <property type="entry name" value="RHO"/>
    <property type="match status" value="1"/>
</dbReference>
<gene>
    <name type="primary">RHO1</name>
    <name type="ordered locus">KLLA0B10626g</name>
</gene>
<sequence>MSQAVGNVASIRRKLVIVGDGACGKTCLLIVFAKGKFPQVYVPTVFDNYVADVEVDGRRVELALWDTAGQEDYDRLRPLSYPDSNVVLICYSIDLPDSLENVMEKWISEVLHFCQGVPIILVGCKADLRNDPQVVEELRAQGLQPVSQAQAQEVADQIGAVDYIECSAKTGYGVREVFEAATRASLVGKQGKSKPKTKSSKKKKCVVL</sequence>
<name>RHO1_KLULA</name>